<protein>
    <recommendedName>
        <fullName evidence="1">Recombination protein RecR</fullName>
    </recommendedName>
</protein>
<organism>
    <name type="scientific">Chelativorans sp. (strain BNC1)</name>
    <dbReference type="NCBI Taxonomy" id="266779"/>
    <lineage>
        <taxon>Bacteria</taxon>
        <taxon>Pseudomonadati</taxon>
        <taxon>Pseudomonadota</taxon>
        <taxon>Alphaproteobacteria</taxon>
        <taxon>Hyphomicrobiales</taxon>
        <taxon>Phyllobacteriaceae</taxon>
        <taxon>Chelativorans</taxon>
    </lineage>
</organism>
<sequence>MSKRIAGPEIERLIQLLAKVPGLGPRSARRAALHLIKKKEQLFSPLTTAMAEALAKVRVCSVCGNVDTSDPCTICTDPRRESATLIVVEDVSDLWALERAAALNARYHVLGGTLSPLDGVGPDDLNIKGLVSRIAEGGVSEVILAVNATVEGQATAHYITDQLVGLEVRVTKLAHGVPVGGELDYLDEGTLAAALKSRTAF</sequence>
<accession>Q11AW7</accession>
<proteinExistence type="inferred from homology"/>
<reference key="1">
    <citation type="submission" date="2006-06" db="EMBL/GenBank/DDBJ databases">
        <title>Complete sequence of chromosome of Mesorhizobium sp. BNC1.</title>
        <authorList>
            <consortium name="US DOE Joint Genome Institute"/>
            <person name="Copeland A."/>
            <person name="Lucas S."/>
            <person name="Lapidus A."/>
            <person name="Barry K."/>
            <person name="Detter J.C."/>
            <person name="Glavina del Rio T."/>
            <person name="Hammon N."/>
            <person name="Israni S."/>
            <person name="Dalin E."/>
            <person name="Tice H."/>
            <person name="Pitluck S."/>
            <person name="Chertkov O."/>
            <person name="Brettin T."/>
            <person name="Bruce D."/>
            <person name="Han C."/>
            <person name="Tapia R."/>
            <person name="Gilna P."/>
            <person name="Schmutz J."/>
            <person name="Larimer F."/>
            <person name="Land M."/>
            <person name="Hauser L."/>
            <person name="Kyrpides N."/>
            <person name="Mikhailova N."/>
            <person name="Richardson P."/>
        </authorList>
    </citation>
    <scope>NUCLEOTIDE SEQUENCE [LARGE SCALE GENOMIC DNA]</scope>
    <source>
        <strain>BNC1</strain>
    </source>
</reference>
<keyword id="KW-0227">DNA damage</keyword>
<keyword id="KW-0233">DNA recombination</keyword>
<keyword id="KW-0234">DNA repair</keyword>
<keyword id="KW-0479">Metal-binding</keyword>
<keyword id="KW-0862">Zinc</keyword>
<keyword id="KW-0863">Zinc-finger</keyword>
<feature type="chain" id="PRO_1000001565" description="Recombination protein RecR">
    <location>
        <begin position="1"/>
        <end position="201"/>
    </location>
</feature>
<feature type="domain" description="Toprim" evidence="1">
    <location>
        <begin position="83"/>
        <end position="178"/>
    </location>
</feature>
<feature type="zinc finger region" description="C4-type" evidence="1">
    <location>
        <begin position="60"/>
        <end position="75"/>
    </location>
</feature>
<name>RECR_CHESB</name>
<comment type="function">
    <text evidence="1">May play a role in DNA repair. It seems to be involved in an RecBC-independent recombinational process of DNA repair. It may act with RecF and RecO.</text>
</comment>
<comment type="similarity">
    <text evidence="1">Belongs to the RecR family.</text>
</comment>
<evidence type="ECO:0000255" key="1">
    <source>
        <dbReference type="HAMAP-Rule" id="MF_00017"/>
    </source>
</evidence>
<dbReference type="EMBL" id="CP000390">
    <property type="protein sequence ID" value="ABG65458.1"/>
    <property type="molecule type" value="Genomic_DNA"/>
</dbReference>
<dbReference type="SMR" id="Q11AW7"/>
<dbReference type="STRING" id="266779.Meso_4091"/>
<dbReference type="KEGG" id="mes:Meso_4091"/>
<dbReference type="eggNOG" id="COG0353">
    <property type="taxonomic scope" value="Bacteria"/>
</dbReference>
<dbReference type="HOGENOM" id="CLU_060739_1_1_5"/>
<dbReference type="OrthoDB" id="9802672at2"/>
<dbReference type="GO" id="GO:0003677">
    <property type="term" value="F:DNA binding"/>
    <property type="evidence" value="ECO:0007669"/>
    <property type="project" value="UniProtKB-UniRule"/>
</dbReference>
<dbReference type="GO" id="GO:0008270">
    <property type="term" value="F:zinc ion binding"/>
    <property type="evidence" value="ECO:0007669"/>
    <property type="project" value="UniProtKB-KW"/>
</dbReference>
<dbReference type="GO" id="GO:0006310">
    <property type="term" value="P:DNA recombination"/>
    <property type="evidence" value="ECO:0007669"/>
    <property type="project" value="UniProtKB-UniRule"/>
</dbReference>
<dbReference type="GO" id="GO:0006281">
    <property type="term" value="P:DNA repair"/>
    <property type="evidence" value="ECO:0007669"/>
    <property type="project" value="UniProtKB-UniRule"/>
</dbReference>
<dbReference type="CDD" id="cd01025">
    <property type="entry name" value="TOPRIM_recR"/>
    <property type="match status" value="1"/>
</dbReference>
<dbReference type="Gene3D" id="3.40.1360.10">
    <property type="match status" value="1"/>
</dbReference>
<dbReference type="Gene3D" id="6.10.250.240">
    <property type="match status" value="1"/>
</dbReference>
<dbReference type="Gene3D" id="1.10.8.420">
    <property type="entry name" value="RecR Domain 1"/>
    <property type="match status" value="1"/>
</dbReference>
<dbReference type="HAMAP" id="MF_00017">
    <property type="entry name" value="RecR"/>
    <property type="match status" value="1"/>
</dbReference>
<dbReference type="InterPro" id="IPR000093">
    <property type="entry name" value="DNA_Rcmb_RecR"/>
</dbReference>
<dbReference type="InterPro" id="IPR023627">
    <property type="entry name" value="Rcmb_RecR"/>
</dbReference>
<dbReference type="InterPro" id="IPR015967">
    <property type="entry name" value="Rcmb_RecR_Znf"/>
</dbReference>
<dbReference type="InterPro" id="IPR006171">
    <property type="entry name" value="TOPRIM_dom"/>
</dbReference>
<dbReference type="InterPro" id="IPR034137">
    <property type="entry name" value="TOPRIM_RecR"/>
</dbReference>
<dbReference type="NCBIfam" id="TIGR00615">
    <property type="entry name" value="recR"/>
    <property type="match status" value="1"/>
</dbReference>
<dbReference type="PANTHER" id="PTHR30446">
    <property type="entry name" value="RECOMBINATION PROTEIN RECR"/>
    <property type="match status" value="1"/>
</dbReference>
<dbReference type="PANTHER" id="PTHR30446:SF0">
    <property type="entry name" value="RECOMBINATION PROTEIN RECR"/>
    <property type="match status" value="1"/>
</dbReference>
<dbReference type="Pfam" id="PF21175">
    <property type="entry name" value="RecR_C"/>
    <property type="match status" value="1"/>
</dbReference>
<dbReference type="Pfam" id="PF21176">
    <property type="entry name" value="RecR_HhH"/>
    <property type="match status" value="1"/>
</dbReference>
<dbReference type="Pfam" id="PF02132">
    <property type="entry name" value="RecR_ZnF"/>
    <property type="match status" value="1"/>
</dbReference>
<dbReference type="Pfam" id="PF13662">
    <property type="entry name" value="Toprim_4"/>
    <property type="match status" value="1"/>
</dbReference>
<dbReference type="SMART" id="SM00493">
    <property type="entry name" value="TOPRIM"/>
    <property type="match status" value="1"/>
</dbReference>
<dbReference type="SUPFAM" id="SSF111304">
    <property type="entry name" value="Recombination protein RecR"/>
    <property type="match status" value="1"/>
</dbReference>
<dbReference type="PROSITE" id="PS50880">
    <property type="entry name" value="TOPRIM"/>
    <property type="match status" value="1"/>
</dbReference>
<gene>
    <name evidence="1" type="primary">recR</name>
    <name type="ordered locus">Meso_4091</name>
</gene>